<comment type="subcellular location">
    <subcellularLocation>
        <location evidence="5">Membrane</location>
        <topology evidence="5">Single-pass type I membrane protein</topology>
    </subcellularLocation>
</comment>
<comment type="tissue specificity">
    <text evidence="4">Expressed in thymocytes.</text>
</comment>
<protein>
    <recommendedName>
        <fullName>V-set and immunoglobulin domain-containing protein 1</fullName>
    </recommendedName>
    <alternativeName>
        <fullName>ChT1 thymocyte antigen</fullName>
    </alternativeName>
</protein>
<organism>
    <name type="scientific">Gallus gallus</name>
    <name type="common">Chicken</name>
    <dbReference type="NCBI Taxonomy" id="9031"/>
    <lineage>
        <taxon>Eukaryota</taxon>
        <taxon>Metazoa</taxon>
        <taxon>Chordata</taxon>
        <taxon>Craniata</taxon>
        <taxon>Vertebrata</taxon>
        <taxon>Euteleostomi</taxon>
        <taxon>Archelosauria</taxon>
        <taxon>Archosauria</taxon>
        <taxon>Dinosauria</taxon>
        <taxon>Saurischia</taxon>
        <taxon>Theropoda</taxon>
        <taxon>Coelurosauria</taxon>
        <taxon>Aves</taxon>
        <taxon>Neognathae</taxon>
        <taxon>Galloanserae</taxon>
        <taxon>Galliformes</taxon>
        <taxon>Phasianidae</taxon>
        <taxon>Phasianinae</taxon>
        <taxon>Gallus</taxon>
    </lineage>
</organism>
<reference key="1">
    <citation type="submission" date="1997-06" db="EMBL/GenBank/DDBJ databases">
        <title>ChT1, a new IgSF member inhibits thymocyte differentiation at the double positive stage.</title>
        <authorList>
            <person name="Katevuo K.H."/>
            <person name="Boyd R."/>
            <person name="Gobel T.T."/>
            <person name="Bean A."/>
            <person name="Dunon D."/>
            <person name="Imhof B.A."/>
            <person name="Vainio O."/>
        </authorList>
    </citation>
    <scope>NUCLEOTIDE SEQUENCE [MRNA]</scope>
    <source>
        <tissue>Thymus</tissue>
    </source>
</reference>
<reference key="2">
    <citation type="journal article" date="1998" name="Eur. J. Immunol.">
        <title>CTX, a Xenopus thymocyte receptor, defines a molecular family conserved throughout vertebrates.</title>
        <authorList>
            <person name="Chretien I."/>
            <person name="Marcuz A."/>
            <person name="Courtet M."/>
            <person name="Katevuo K."/>
            <person name="Vainio O."/>
            <person name="Heath J.K."/>
            <person name="White S.J."/>
            <person name="Du Pasquier L."/>
        </authorList>
    </citation>
    <scope>NUCLEOTIDE SEQUENCE [GENOMIC DNA]</scope>
    <scope>TISSUE SPECIFICITY</scope>
</reference>
<name>VSIG1_CHICK</name>
<keyword id="KW-1015">Disulfide bond</keyword>
<keyword id="KW-0393">Immunoglobulin domain</keyword>
<keyword id="KW-0472">Membrane</keyword>
<keyword id="KW-1185">Reference proteome</keyword>
<keyword id="KW-0677">Repeat</keyword>
<keyword id="KW-0732">Signal</keyword>
<keyword id="KW-0812">Transmembrane</keyword>
<keyword id="KW-1133">Transmembrane helix</keyword>
<evidence type="ECO:0000255" key="1"/>
<evidence type="ECO:0000255" key="2">
    <source>
        <dbReference type="PROSITE-ProRule" id="PRU00114"/>
    </source>
</evidence>
<evidence type="ECO:0000256" key="3">
    <source>
        <dbReference type="SAM" id="MobiDB-lite"/>
    </source>
</evidence>
<evidence type="ECO:0000269" key="4">
    <source>
    </source>
</evidence>
<evidence type="ECO:0000305" key="5"/>
<proteinExistence type="evidence at transcript level"/>
<feature type="signal peptide" evidence="1">
    <location>
        <begin position="1"/>
        <end position="21"/>
    </location>
</feature>
<feature type="chain" id="PRO_5000147194" description="V-set and immunoglobulin domain-containing protein 1">
    <location>
        <begin position="22"/>
        <end position="335"/>
    </location>
</feature>
<feature type="topological domain" description="Extracellular" evidence="1">
    <location>
        <begin position="22"/>
        <end position="233"/>
    </location>
</feature>
<feature type="transmembrane region" description="Helical" evidence="1">
    <location>
        <begin position="234"/>
        <end position="254"/>
    </location>
</feature>
<feature type="topological domain" description="Cytoplasmic" evidence="1">
    <location>
        <begin position="255"/>
        <end position="335"/>
    </location>
</feature>
<feature type="domain" description="Ig-like V-type">
    <location>
        <begin position="22"/>
        <end position="136"/>
    </location>
</feature>
<feature type="domain" description="Ig-like C2-type">
    <location>
        <begin position="139"/>
        <end position="226"/>
    </location>
</feature>
<feature type="region of interest" description="Disordered" evidence="3">
    <location>
        <begin position="266"/>
        <end position="335"/>
    </location>
</feature>
<feature type="compositionally biased region" description="Polar residues" evidence="3">
    <location>
        <begin position="268"/>
        <end position="306"/>
    </location>
</feature>
<feature type="compositionally biased region" description="Basic and acidic residues" evidence="3">
    <location>
        <begin position="319"/>
        <end position="335"/>
    </location>
</feature>
<feature type="disulfide bond" evidence="2">
    <location>
        <begin position="43"/>
        <end position="115"/>
    </location>
</feature>
<feature type="disulfide bond" evidence="2">
    <location>
        <begin position="160"/>
        <end position="210"/>
    </location>
</feature>
<feature type="sequence conflict" description="In Ref. 2; AAD17523." evidence="5" ref="2">
    <original>H</original>
    <variation>R</variation>
    <location>
        <position position="20"/>
    </location>
</feature>
<feature type="sequence conflict" description="In Ref. 2; AAD17523." evidence="5" ref="2">
    <original>P</original>
    <variation>S</variation>
    <location>
        <position position="167"/>
    </location>
</feature>
<feature type="sequence conflict" description="In Ref. 1; CAA74390." evidence="5" ref="1">
    <original>A</original>
    <variation>D</variation>
    <location>
        <position position="246"/>
    </location>
</feature>
<feature type="sequence conflict" description="In Ref. 2; AAD17523." evidence="5" ref="2">
    <original>AT</original>
    <variation>QP</variation>
    <location>
        <begin position="293"/>
        <end position="294"/>
    </location>
</feature>
<feature type="sequence conflict" description="In Ref. 2; AAD17523." evidence="5" ref="2">
    <original>P</original>
    <variation>S</variation>
    <location>
        <position position="314"/>
    </location>
</feature>
<sequence length="335" mass="36509">MFPTMLKIFPILATLAGHVHGVVVTVPEKTVNVKTGGNATLLCTYTSSQPLGNFFIQWSFYSAKESQLHTIYYYSEGQSYSYGEFKDRITAATSPGNASITISNMQPSDTGSYTCEVFSPQDDAGQSQKSVIVNVLVKPSKPFCKIEGTPEKGHLIYLLCKCDQGLPHPTYRWYKVDENTLTPVTEYFNPDTGILYIGNLTTFETGHYRCIASNIMGNSTCELDLTSMHSDGNIVAGALIGAILAAVIICAIVWVLTKKAKKKKSSSNEMQVMAQKQSNAEYAQVPNEENTPATAVLPSNATNEQPSADEAAAPETPENDEKHEVQKEETAGSSF</sequence>
<accession>Q9PWR4</accession>
<accession>Q9YGH1</accession>
<accession>Q9YGV5</accession>
<gene>
    <name type="primary">VSIG1</name>
    <name type="synonym">ChT1</name>
</gene>
<dbReference type="EMBL" id="Y14063">
    <property type="protein sequence ID" value="CAA74390.1"/>
    <property type="molecule type" value="mRNA"/>
</dbReference>
<dbReference type="EMBL" id="Y14064">
    <property type="protein sequence ID" value="CAA74391.1"/>
    <property type="molecule type" value="mRNA"/>
</dbReference>
<dbReference type="EMBL" id="AF061023">
    <property type="protein sequence ID" value="AAD17523.1"/>
    <property type="molecule type" value="Genomic_DNA"/>
</dbReference>
<dbReference type="RefSeq" id="NP_001001745.1">
    <property type="nucleotide sequence ID" value="NM_001001745.1"/>
</dbReference>
<dbReference type="SMR" id="Q9PWR4"/>
<dbReference type="FunCoup" id="Q9PWR4">
    <property type="interactions" value="1"/>
</dbReference>
<dbReference type="PaxDb" id="9031-ENSGALP00000013480"/>
<dbReference type="GeneID" id="414795"/>
<dbReference type="KEGG" id="gga:414795"/>
<dbReference type="CTD" id="340547"/>
<dbReference type="VEuPathDB" id="HostDB:geneid_414795"/>
<dbReference type="eggNOG" id="ENOG502QU0R">
    <property type="taxonomic scope" value="Eukaryota"/>
</dbReference>
<dbReference type="InParanoid" id="Q9PWR4"/>
<dbReference type="OrthoDB" id="190835at2759"/>
<dbReference type="PhylomeDB" id="Q9PWR4"/>
<dbReference type="PRO" id="PR:Q9PWR4"/>
<dbReference type="Proteomes" id="UP000000539">
    <property type="component" value="Unassembled WGS sequence"/>
</dbReference>
<dbReference type="GO" id="GO:0016323">
    <property type="term" value="C:basolateral plasma membrane"/>
    <property type="evidence" value="ECO:0000318"/>
    <property type="project" value="GO_Central"/>
</dbReference>
<dbReference type="GO" id="GO:0003382">
    <property type="term" value="P:epithelial cell morphogenesis"/>
    <property type="evidence" value="ECO:0007669"/>
    <property type="project" value="InterPro"/>
</dbReference>
<dbReference type="GO" id="GO:0030277">
    <property type="term" value="P:maintenance of gastrointestinal epithelium"/>
    <property type="evidence" value="ECO:0000318"/>
    <property type="project" value="GO_Central"/>
</dbReference>
<dbReference type="FunFam" id="2.60.40.10:FF:000095">
    <property type="entry name" value="immunoglobulin superfamily member 11 isoform X1"/>
    <property type="match status" value="1"/>
</dbReference>
<dbReference type="FunFam" id="2.60.40.10:FF:000931">
    <property type="entry name" value="V-set and immunoglobulin domain containing 1"/>
    <property type="match status" value="1"/>
</dbReference>
<dbReference type="Gene3D" id="2.60.40.10">
    <property type="entry name" value="Immunoglobulins"/>
    <property type="match status" value="2"/>
</dbReference>
<dbReference type="InterPro" id="IPR007110">
    <property type="entry name" value="Ig-like_dom"/>
</dbReference>
<dbReference type="InterPro" id="IPR036179">
    <property type="entry name" value="Ig-like_dom_sf"/>
</dbReference>
<dbReference type="InterPro" id="IPR013783">
    <property type="entry name" value="Ig-like_fold"/>
</dbReference>
<dbReference type="InterPro" id="IPR003599">
    <property type="entry name" value="Ig_sub"/>
</dbReference>
<dbReference type="InterPro" id="IPR003598">
    <property type="entry name" value="Ig_sub2"/>
</dbReference>
<dbReference type="InterPro" id="IPR013106">
    <property type="entry name" value="Ig_V-set"/>
</dbReference>
<dbReference type="InterPro" id="IPR029861">
    <property type="entry name" value="VSIG1"/>
</dbReference>
<dbReference type="PANTHER" id="PTHR44974">
    <property type="entry name" value="V-SET AND IMMUNOGLOBULIN DOMAIN-CONTAINING PROTEIN 1"/>
    <property type="match status" value="1"/>
</dbReference>
<dbReference type="PANTHER" id="PTHR44974:SF1">
    <property type="entry name" value="V-SET AND IMMUNOGLOBULIN DOMAIN-CONTAINING PROTEIN 1"/>
    <property type="match status" value="1"/>
</dbReference>
<dbReference type="Pfam" id="PF13927">
    <property type="entry name" value="Ig_3"/>
    <property type="match status" value="1"/>
</dbReference>
<dbReference type="Pfam" id="PF07686">
    <property type="entry name" value="V-set"/>
    <property type="match status" value="1"/>
</dbReference>
<dbReference type="SMART" id="SM00409">
    <property type="entry name" value="IG"/>
    <property type="match status" value="2"/>
</dbReference>
<dbReference type="SMART" id="SM00408">
    <property type="entry name" value="IGc2"/>
    <property type="match status" value="2"/>
</dbReference>
<dbReference type="SMART" id="SM00406">
    <property type="entry name" value="IGv"/>
    <property type="match status" value="1"/>
</dbReference>
<dbReference type="SUPFAM" id="SSF48726">
    <property type="entry name" value="Immunoglobulin"/>
    <property type="match status" value="2"/>
</dbReference>
<dbReference type="PROSITE" id="PS50835">
    <property type="entry name" value="IG_LIKE"/>
    <property type="match status" value="2"/>
</dbReference>